<name>PPP5_ASPOR</name>
<sequence length="478" mass="54362">MASSDLEAATALKVQGNKAFGQHEWPTAVDFYTQAIAKYDREPSFFSNRAQAHIKLEAYGFAIADATKALELDPAYTKAYWRRALANTAILNYKDALRDFKVVAKREPNNRDAKVKLADCEKLVRRMEFEKAIEVGDPPSAFEDLDIDAIAVDDSYDGVRLEKEMTQEFIDDMIERFKNGKKIHRKYAFQIVKAVKDIVYAEPTMVEIGVDQGTKLTVCGDTHGQFFDLLEIFRLNGYPSEKHAYLFNGDFVDRGSWSTEIALLLYAYKWLRPNGIFLNRGNHETDDMNKVYGFEGECKAKYNERMFKVFSESFSALPLATLIGNKYLVLHGGLFSDDNTSLDDIRKLDRHNQRQPGQQGLMMEMLWTDPQTEPGRGPSKRGVGLQFGPDVTKRFCEKNGLEAIIRSHEVRMEGYEVEHDGRCITVFSAPKYCDTTENKGAFINVGPELKLDFQVFEAVPHPDIKPMAYAQNSIMSMM</sequence>
<dbReference type="EC" id="3.1.3.16" evidence="8"/>
<dbReference type="EMBL" id="AP007164">
    <property type="protein sequence ID" value="BAE61946.1"/>
    <property type="molecule type" value="Genomic_DNA"/>
</dbReference>
<dbReference type="RefSeq" id="XP_001823079.1">
    <property type="nucleotide sequence ID" value="XM_001823027.2"/>
</dbReference>
<dbReference type="STRING" id="510516.Q2U919"/>
<dbReference type="EnsemblFungi" id="BAE61946">
    <property type="protein sequence ID" value="BAE61946"/>
    <property type="gene ID" value="AO090701000208"/>
</dbReference>
<dbReference type="GeneID" id="5995136"/>
<dbReference type="KEGG" id="aor:AO090701000208"/>
<dbReference type="VEuPathDB" id="FungiDB:AO090701000208"/>
<dbReference type="HOGENOM" id="CLU_004962_5_2_1"/>
<dbReference type="OMA" id="IHKKYAF"/>
<dbReference type="OrthoDB" id="78968at5052"/>
<dbReference type="Proteomes" id="UP000006564">
    <property type="component" value="Chromosome 5"/>
</dbReference>
<dbReference type="GO" id="GO:0005634">
    <property type="term" value="C:nucleus"/>
    <property type="evidence" value="ECO:0007669"/>
    <property type="project" value="UniProtKB-SubCell"/>
</dbReference>
<dbReference type="GO" id="GO:0046872">
    <property type="term" value="F:metal ion binding"/>
    <property type="evidence" value="ECO:0007669"/>
    <property type="project" value="UniProtKB-KW"/>
</dbReference>
<dbReference type="GO" id="GO:0016791">
    <property type="term" value="F:phosphatase activity"/>
    <property type="evidence" value="ECO:0000314"/>
    <property type="project" value="UniProtKB"/>
</dbReference>
<dbReference type="GO" id="GO:0004722">
    <property type="term" value="F:protein serine/threonine phosphatase activity"/>
    <property type="evidence" value="ECO:0007669"/>
    <property type="project" value="UniProtKB-EC"/>
</dbReference>
<dbReference type="CDD" id="cd07417">
    <property type="entry name" value="MPP_PP5_C"/>
    <property type="match status" value="1"/>
</dbReference>
<dbReference type="FunFam" id="1.25.40.10:FF:000389">
    <property type="entry name" value="Serine/threonine-protein phosphatase"/>
    <property type="match status" value="1"/>
</dbReference>
<dbReference type="FunFam" id="3.60.21.10:FF:000039">
    <property type="entry name" value="Serine/threonine-protein phosphatase"/>
    <property type="match status" value="1"/>
</dbReference>
<dbReference type="Gene3D" id="3.60.21.10">
    <property type="match status" value="1"/>
</dbReference>
<dbReference type="Gene3D" id="1.25.40.10">
    <property type="entry name" value="Tetratricopeptide repeat domain"/>
    <property type="match status" value="1"/>
</dbReference>
<dbReference type="InterPro" id="IPR004843">
    <property type="entry name" value="Calcineurin-like_PHP_ApaH"/>
</dbReference>
<dbReference type="InterPro" id="IPR029052">
    <property type="entry name" value="Metallo-depent_PP-like"/>
</dbReference>
<dbReference type="InterPro" id="IPR041753">
    <property type="entry name" value="PP5_C"/>
</dbReference>
<dbReference type="InterPro" id="IPR013235">
    <property type="entry name" value="PPP_dom"/>
</dbReference>
<dbReference type="InterPro" id="IPR051134">
    <property type="entry name" value="PPP_phosphatase"/>
</dbReference>
<dbReference type="InterPro" id="IPR006186">
    <property type="entry name" value="Ser/Thr-sp_prot-phosphatase"/>
</dbReference>
<dbReference type="InterPro" id="IPR011990">
    <property type="entry name" value="TPR-like_helical_dom_sf"/>
</dbReference>
<dbReference type="InterPro" id="IPR019734">
    <property type="entry name" value="TPR_rpt"/>
</dbReference>
<dbReference type="PANTHER" id="PTHR45668">
    <property type="entry name" value="SERINE/THREONINE-PROTEIN PHOSPHATASE 5-RELATED"/>
    <property type="match status" value="1"/>
</dbReference>
<dbReference type="PANTHER" id="PTHR45668:SF5">
    <property type="entry name" value="SERINE_THREONINE-PROTEIN PHOSPHATASE 5"/>
    <property type="match status" value="1"/>
</dbReference>
<dbReference type="Pfam" id="PF00149">
    <property type="entry name" value="Metallophos"/>
    <property type="match status" value="1"/>
</dbReference>
<dbReference type="Pfam" id="PF08321">
    <property type="entry name" value="PPP5"/>
    <property type="match status" value="1"/>
</dbReference>
<dbReference type="PIRSF" id="PIRSF033096">
    <property type="entry name" value="PPPtase_5"/>
    <property type="match status" value="1"/>
</dbReference>
<dbReference type="PRINTS" id="PR00114">
    <property type="entry name" value="STPHPHTASE"/>
</dbReference>
<dbReference type="SMART" id="SM00156">
    <property type="entry name" value="PP2Ac"/>
    <property type="match status" value="1"/>
</dbReference>
<dbReference type="SMART" id="SM00028">
    <property type="entry name" value="TPR"/>
    <property type="match status" value="3"/>
</dbReference>
<dbReference type="SUPFAM" id="SSF56300">
    <property type="entry name" value="Metallo-dependent phosphatases"/>
    <property type="match status" value="1"/>
</dbReference>
<dbReference type="SUPFAM" id="SSF48452">
    <property type="entry name" value="TPR-like"/>
    <property type="match status" value="1"/>
</dbReference>
<dbReference type="PROSITE" id="PS00125">
    <property type="entry name" value="SER_THR_PHOSPHATASE"/>
    <property type="match status" value="1"/>
</dbReference>
<protein>
    <recommendedName>
        <fullName evidence="2">Serine/threonine-protein phosphatase T</fullName>
        <shortName evidence="2">PPT</shortName>
        <ecNumber evidence="8">3.1.3.16</ecNumber>
    </recommendedName>
    <alternativeName>
        <fullName evidence="6">AoPPT</fullName>
    </alternativeName>
</protein>
<proteinExistence type="evidence at protein level"/>
<accession>Q2U919</accession>
<organism evidence="10">
    <name type="scientific">Aspergillus oryzae (strain ATCC 42149 / RIB 40)</name>
    <name type="common">Yellow koji mold</name>
    <dbReference type="NCBI Taxonomy" id="510516"/>
    <lineage>
        <taxon>Eukaryota</taxon>
        <taxon>Fungi</taxon>
        <taxon>Dikarya</taxon>
        <taxon>Ascomycota</taxon>
        <taxon>Pezizomycotina</taxon>
        <taxon>Eurotiomycetes</taxon>
        <taxon>Eurotiomycetidae</taxon>
        <taxon>Eurotiales</taxon>
        <taxon>Aspergillaceae</taxon>
        <taxon>Aspergillus</taxon>
        <taxon>Aspergillus subgen. Circumdati</taxon>
    </lineage>
</organism>
<keyword id="KW-0378">Hydrolase</keyword>
<keyword id="KW-0464">Manganese</keyword>
<keyword id="KW-0479">Metal-binding</keyword>
<keyword id="KW-0539">Nucleus</keyword>
<keyword id="KW-0904">Protein phosphatase</keyword>
<keyword id="KW-1185">Reference proteome</keyword>
<keyword id="KW-0677">Repeat</keyword>
<keyword id="KW-0802">TPR repeat</keyword>
<reference evidence="10" key="1">
    <citation type="journal article" date="2005" name="Nature">
        <title>Genome sequencing and analysis of Aspergillus oryzae.</title>
        <authorList>
            <person name="Machida M."/>
            <person name="Asai K."/>
            <person name="Sano M."/>
            <person name="Tanaka T."/>
            <person name="Kumagai T."/>
            <person name="Terai G."/>
            <person name="Kusumoto K."/>
            <person name="Arima T."/>
            <person name="Akita O."/>
            <person name="Kashiwagi Y."/>
            <person name="Abe K."/>
            <person name="Gomi K."/>
            <person name="Horiuchi H."/>
            <person name="Kitamoto K."/>
            <person name="Kobayashi T."/>
            <person name="Takeuchi M."/>
            <person name="Denning D.W."/>
            <person name="Galagan J.E."/>
            <person name="Nierman W.C."/>
            <person name="Yu J."/>
            <person name="Archer D.B."/>
            <person name="Bennett J.W."/>
            <person name="Bhatnagar D."/>
            <person name="Cleveland T.E."/>
            <person name="Fedorova N.D."/>
            <person name="Gotoh O."/>
            <person name="Horikawa H."/>
            <person name="Hosoyama A."/>
            <person name="Ichinomiya M."/>
            <person name="Igarashi R."/>
            <person name="Iwashita K."/>
            <person name="Juvvadi P.R."/>
            <person name="Kato M."/>
            <person name="Kato Y."/>
            <person name="Kin T."/>
            <person name="Kokubun A."/>
            <person name="Maeda H."/>
            <person name="Maeyama N."/>
            <person name="Maruyama J."/>
            <person name="Nagasaki H."/>
            <person name="Nakajima T."/>
            <person name="Oda K."/>
            <person name="Okada K."/>
            <person name="Paulsen I."/>
            <person name="Sakamoto K."/>
            <person name="Sawano T."/>
            <person name="Takahashi M."/>
            <person name="Takase K."/>
            <person name="Terabayashi Y."/>
            <person name="Wortman J.R."/>
            <person name="Yamada O."/>
            <person name="Yamagata Y."/>
            <person name="Anazawa H."/>
            <person name="Hata Y."/>
            <person name="Koide Y."/>
            <person name="Komori T."/>
            <person name="Koyama Y."/>
            <person name="Minetoki T."/>
            <person name="Suharnan S."/>
            <person name="Tanaka A."/>
            <person name="Isono K."/>
            <person name="Kuhara S."/>
            <person name="Ogasawara N."/>
            <person name="Kikuchi H."/>
        </authorList>
    </citation>
    <scope>NUCLEOTIDE SEQUENCE [LARGE SCALE GENOMIC DNA]</scope>
    <source>
        <strain evidence="10">ATCC 42149 / RIB 40</strain>
    </source>
</reference>
<reference evidence="7" key="2">
    <citation type="journal article" date="2007" name="Int. J. Biol. Macromol.">
        <title>TPR domain of Ser/Thr phosphatase of Aspergillus oryzae shows no auto-inhibitory effect on the dephosphorylation activity.</title>
        <authorList>
            <person name="Feng B."/>
            <person name="Zhao C.H."/>
            <person name="Tanaka S."/>
            <person name="Imanaka H."/>
            <person name="Imamura K."/>
            <person name="Nakanishi K."/>
        </authorList>
    </citation>
    <scope>CATALYTIC ACTIVITY</scope>
    <scope>BIOPHYSICOCHEMICAL PROPERTIES</scope>
    <source>
        <strain evidence="6">AGL142-72</strain>
    </source>
</reference>
<evidence type="ECO:0000250" key="1">
    <source>
        <dbReference type="UniProtKB" id="P53041"/>
    </source>
</evidence>
<evidence type="ECO:0000250" key="2">
    <source>
        <dbReference type="UniProtKB" id="P53043"/>
    </source>
</evidence>
<evidence type="ECO:0000255" key="3"/>
<evidence type="ECO:0000255" key="4">
    <source>
        <dbReference type="PIRSR" id="PIRSR033096-1"/>
    </source>
</evidence>
<evidence type="ECO:0000269" key="5">
    <source>
    </source>
</evidence>
<evidence type="ECO:0000303" key="6">
    <source>
    </source>
</evidence>
<evidence type="ECO:0000305" key="7"/>
<evidence type="ECO:0000305" key="8">
    <source>
    </source>
</evidence>
<evidence type="ECO:0000312" key="9">
    <source>
        <dbReference type="EMBL" id="BAE61946.1"/>
    </source>
</evidence>
<evidence type="ECO:0000312" key="10">
    <source>
        <dbReference type="Proteomes" id="UP000006564"/>
    </source>
</evidence>
<feature type="chain" id="PRO_0000461643" description="Serine/threonine-protein phosphatase T">
    <location>
        <begin position="1"/>
        <end position="478"/>
    </location>
</feature>
<feature type="repeat" description="TPR 1" evidence="3">
    <location>
        <begin position="9"/>
        <end position="42"/>
    </location>
</feature>
<feature type="repeat" description="TPR 2" evidence="3">
    <location>
        <begin position="43"/>
        <end position="76"/>
    </location>
</feature>
<feature type="repeat" description="TPR 3" evidence="3">
    <location>
        <begin position="78"/>
        <end position="110"/>
    </location>
</feature>
<feature type="region of interest" description="Catalytic" evidence="8">
    <location>
        <begin position="151"/>
        <end position="463"/>
    </location>
</feature>
<feature type="active site" description="Proton donor/acceptor" evidence="4">
    <location>
        <position position="283"/>
    </location>
</feature>
<feature type="binding site" evidence="1">
    <location>
        <position position="221"/>
    </location>
    <ligand>
        <name>Mn(2+)</name>
        <dbReference type="ChEBI" id="CHEBI:29035"/>
        <label>1</label>
    </ligand>
</feature>
<feature type="binding site" evidence="1">
    <location>
        <position position="223"/>
    </location>
    <ligand>
        <name>Mn(2+)</name>
        <dbReference type="ChEBI" id="CHEBI:29035"/>
        <label>1</label>
    </ligand>
</feature>
<feature type="binding site" evidence="1">
    <location>
        <position position="250"/>
    </location>
    <ligand>
        <name>Mn(2+)</name>
        <dbReference type="ChEBI" id="CHEBI:29035"/>
        <label>1</label>
    </ligand>
</feature>
<feature type="binding site" evidence="1">
    <location>
        <position position="250"/>
    </location>
    <ligand>
        <name>Mn(2+)</name>
        <dbReference type="ChEBI" id="CHEBI:29035"/>
        <label>2</label>
    </ligand>
</feature>
<feature type="binding site" evidence="1">
    <location>
        <position position="282"/>
    </location>
    <ligand>
        <name>Mn(2+)</name>
        <dbReference type="ChEBI" id="CHEBI:29035"/>
        <label>2</label>
    </ligand>
</feature>
<feature type="binding site" evidence="1">
    <location>
        <position position="331"/>
    </location>
    <ligand>
        <name>Mn(2+)</name>
        <dbReference type="ChEBI" id="CHEBI:29035"/>
        <label>2</label>
    </ligand>
</feature>
<feature type="binding site" evidence="1">
    <location>
        <position position="408"/>
    </location>
    <ligand>
        <name>Mn(2+)</name>
        <dbReference type="ChEBI" id="CHEBI:29035"/>
        <label>2</label>
    </ligand>
</feature>
<gene>
    <name evidence="7" type="primary">ppt1</name>
    <name evidence="9" type="ORF">AO090701000208</name>
</gene>
<comment type="function">
    <text evidence="2">Protein phosphatase that specifically binds to and dephosphorylates the molecular chaperone Hsp90. Dephosphorylation positively regulates the Hsp90 chaperone machinery.</text>
</comment>
<comment type="catalytic activity">
    <reaction evidence="8">
        <text>O-phospho-L-seryl-[protein] + H2O = L-seryl-[protein] + phosphate</text>
        <dbReference type="Rhea" id="RHEA:20629"/>
        <dbReference type="Rhea" id="RHEA-COMP:9863"/>
        <dbReference type="Rhea" id="RHEA-COMP:11604"/>
        <dbReference type="ChEBI" id="CHEBI:15377"/>
        <dbReference type="ChEBI" id="CHEBI:29999"/>
        <dbReference type="ChEBI" id="CHEBI:43474"/>
        <dbReference type="ChEBI" id="CHEBI:83421"/>
        <dbReference type="EC" id="3.1.3.16"/>
    </reaction>
    <physiologicalReaction direction="left-to-right" evidence="8">
        <dbReference type="Rhea" id="RHEA:20630"/>
    </physiologicalReaction>
</comment>
<comment type="catalytic activity">
    <reaction evidence="8">
        <text>O-phospho-L-threonyl-[protein] + H2O = L-threonyl-[protein] + phosphate</text>
        <dbReference type="Rhea" id="RHEA:47004"/>
        <dbReference type="Rhea" id="RHEA-COMP:11060"/>
        <dbReference type="Rhea" id="RHEA-COMP:11605"/>
        <dbReference type="ChEBI" id="CHEBI:15377"/>
        <dbReference type="ChEBI" id="CHEBI:30013"/>
        <dbReference type="ChEBI" id="CHEBI:43474"/>
        <dbReference type="ChEBI" id="CHEBI:61977"/>
        <dbReference type="EC" id="3.1.3.16"/>
    </reaction>
    <physiologicalReaction direction="left-to-right" evidence="8">
        <dbReference type="Rhea" id="RHEA:47005"/>
    </physiologicalReaction>
</comment>
<comment type="cofactor">
    <cofactor evidence="1">
        <name>Mg(2+)</name>
        <dbReference type="ChEBI" id="CHEBI:18420"/>
    </cofactor>
    <cofactor evidence="1">
        <name>Mn(2+)</name>
        <dbReference type="ChEBI" id="CHEBI:29035"/>
    </cofactor>
    <text evidence="1">Binds 2 Mg(2+) or Mn(2+) cations per subunit.</text>
</comment>
<comment type="biophysicochemical properties">
    <kinetics>
        <KM evidence="5">29 mM for p-nitrophenylphosphate (at 30 degrees Celsius and at pH 7)</KM>
        <text evidence="5">kcat is 5.4 sec(-1) with p-nitrophenylphosphate as substrate (at 30 degrees Celsius and at pH 7).</text>
    </kinetics>
</comment>
<comment type="subcellular location">
    <subcellularLocation>
        <location evidence="1">Nucleus</location>
    </subcellularLocation>
</comment>
<comment type="domain">
    <text evidence="1">The TPR repeats mediate protein-protein interactions with substrate proteins, but also autoinhibit PPT phosphatase activity.</text>
</comment>
<comment type="similarity">
    <text evidence="7">Belongs to the PPP phosphatase family. PP-5 (PP-T) subfamily.</text>
</comment>